<name>FICD_MOUSE</name>
<dbReference type="EC" id="2.7.7.108" evidence="2"/>
<dbReference type="EC" id="3.1.4.-" evidence="1"/>
<dbReference type="EMBL" id="AK044446">
    <property type="protein sequence ID" value="BAC31924.1"/>
    <property type="molecule type" value="mRNA"/>
</dbReference>
<dbReference type="EMBL" id="AK054325">
    <property type="protein sequence ID" value="BAC35731.1"/>
    <property type="molecule type" value="mRNA"/>
</dbReference>
<dbReference type="EMBL" id="AK087477">
    <property type="protein sequence ID" value="BAC39889.1"/>
    <property type="molecule type" value="mRNA"/>
</dbReference>
<dbReference type="EMBL" id="BC139821">
    <property type="protein sequence ID" value="AAI39822.1"/>
    <property type="molecule type" value="mRNA"/>
</dbReference>
<dbReference type="CCDS" id="CCDS51620.1">
    <molecule id="Q8BIX9-1"/>
</dbReference>
<dbReference type="RefSeq" id="NP_001010825.2">
    <molecule id="Q8BIX9-1"/>
    <property type="nucleotide sequence ID" value="NM_001010825.3"/>
</dbReference>
<dbReference type="RefSeq" id="XP_006530348.1">
    <molecule id="Q8BIX9-1"/>
    <property type="nucleotide sequence ID" value="XM_006530285.5"/>
</dbReference>
<dbReference type="SMR" id="Q8BIX9"/>
<dbReference type="FunCoup" id="Q8BIX9">
    <property type="interactions" value="460"/>
</dbReference>
<dbReference type="STRING" id="10090.ENSMUSP00000071719"/>
<dbReference type="GlyCosmos" id="Q8BIX9">
    <property type="glycosylation" value="1 site, No reported glycans"/>
</dbReference>
<dbReference type="GlyGen" id="Q8BIX9">
    <property type="glycosylation" value="1 site, 1 N-linked glycan (1 site)"/>
</dbReference>
<dbReference type="iPTMnet" id="Q8BIX9"/>
<dbReference type="PhosphoSitePlus" id="Q8BIX9"/>
<dbReference type="PaxDb" id="10090-ENSMUSP00000071719"/>
<dbReference type="ProteomicsDB" id="267474">
    <molecule id="Q8BIX9-1"/>
</dbReference>
<dbReference type="ProteomicsDB" id="267475">
    <molecule id="Q8BIX9-2"/>
</dbReference>
<dbReference type="Antibodypedia" id="18273">
    <property type="antibodies" value="299 antibodies from 25 providers"/>
</dbReference>
<dbReference type="Ensembl" id="ENSMUST00000065698.7">
    <molecule id="Q8BIX9-1"/>
    <property type="protein sequence ID" value="ENSMUSP00000071719.5"/>
    <property type="gene ID" value="ENSMUSG00000053334.7"/>
</dbReference>
<dbReference type="GeneID" id="231630"/>
<dbReference type="KEGG" id="mmu:231630"/>
<dbReference type="UCSC" id="uc008yyl.2">
    <molecule id="Q8BIX9-1"/>
    <property type="organism name" value="mouse"/>
</dbReference>
<dbReference type="AGR" id="MGI:1098550"/>
<dbReference type="CTD" id="11153"/>
<dbReference type="MGI" id="MGI:1098550">
    <property type="gene designation" value="Ficd"/>
</dbReference>
<dbReference type="VEuPathDB" id="HostDB:ENSMUSG00000053334"/>
<dbReference type="eggNOG" id="KOG3824">
    <property type="taxonomic scope" value="Eukaryota"/>
</dbReference>
<dbReference type="GeneTree" id="ENSGT00390000008873"/>
<dbReference type="HOGENOM" id="CLU_040460_0_0_1"/>
<dbReference type="InParanoid" id="Q8BIX9"/>
<dbReference type="OMA" id="QLRCQLW"/>
<dbReference type="OrthoDB" id="439046at2759"/>
<dbReference type="PhylomeDB" id="Q8BIX9"/>
<dbReference type="TreeFam" id="TF314692"/>
<dbReference type="BioGRID-ORCS" id="231630">
    <property type="hits" value="1 hit in 76 CRISPR screens"/>
</dbReference>
<dbReference type="PRO" id="PR:Q8BIX9"/>
<dbReference type="Proteomes" id="UP000000589">
    <property type="component" value="Chromosome 5"/>
</dbReference>
<dbReference type="RNAct" id="Q8BIX9">
    <property type="molecule type" value="protein"/>
</dbReference>
<dbReference type="Bgee" id="ENSMUSG00000053334">
    <property type="expression patterns" value="Expressed in cleaving embryo and 191 other cell types or tissues"/>
</dbReference>
<dbReference type="GO" id="GO:0005783">
    <property type="term" value="C:endoplasmic reticulum"/>
    <property type="evidence" value="ECO:0000250"/>
    <property type="project" value="UniProtKB"/>
</dbReference>
<dbReference type="GO" id="GO:0005789">
    <property type="term" value="C:endoplasmic reticulum membrane"/>
    <property type="evidence" value="ECO:0000250"/>
    <property type="project" value="UniProtKB"/>
</dbReference>
<dbReference type="GO" id="GO:0070733">
    <property type="term" value="F:AMPylase activity"/>
    <property type="evidence" value="ECO:0000250"/>
    <property type="project" value="UniProtKB"/>
</dbReference>
<dbReference type="GO" id="GO:0005524">
    <property type="term" value="F:ATP binding"/>
    <property type="evidence" value="ECO:0000250"/>
    <property type="project" value="UniProtKB"/>
</dbReference>
<dbReference type="GO" id="GO:0030544">
    <property type="term" value="F:Hsp70 protein binding"/>
    <property type="evidence" value="ECO:0007669"/>
    <property type="project" value="Ensembl"/>
</dbReference>
<dbReference type="GO" id="GO:0044603">
    <property type="term" value="F:protein adenylylhydrolase activity"/>
    <property type="evidence" value="ECO:0000250"/>
    <property type="project" value="UniProtKB"/>
</dbReference>
<dbReference type="GO" id="GO:0042803">
    <property type="term" value="F:protein homodimerization activity"/>
    <property type="evidence" value="ECO:0000250"/>
    <property type="project" value="UniProtKB"/>
</dbReference>
<dbReference type="GO" id="GO:0051087">
    <property type="term" value="F:protein-folding chaperone binding"/>
    <property type="evidence" value="ECO:0000250"/>
    <property type="project" value="UniProtKB"/>
</dbReference>
<dbReference type="GO" id="GO:0018117">
    <property type="term" value="P:protein adenylylation"/>
    <property type="evidence" value="ECO:0000250"/>
    <property type="project" value="UniProtKB"/>
</dbReference>
<dbReference type="GO" id="GO:0044602">
    <property type="term" value="P:protein deadenylylation"/>
    <property type="evidence" value="ECO:0000250"/>
    <property type="project" value="UniProtKB"/>
</dbReference>
<dbReference type="GO" id="GO:1903894">
    <property type="term" value="P:regulation of IRE1-mediated unfolded protein response"/>
    <property type="evidence" value="ECO:0000250"/>
    <property type="project" value="UniProtKB"/>
</dbReference>
<dbReference type="GO" id="GO:0034976">
    <property type="term" value="P:response to endoplasmic reticulum stress"/>
    <property type="evidence" value="ECO:0000250"/>
    <property type="project" value="UniProtKB"/>
</dbReference>
<dbReference type="GO" id="GO:0006986">
    <property type="term" value="P:response to unfolded protein"/>
    <property type="evidence" value="ECO:0007669"/>
    <property type="project" value="UniProtKB-KW"/>
</dbReference>
<dbReference type="FunFam" id="1.10.3290.10:FF:000001">
    <property type="entry name" value="adenosine monophosphate-protein transferase FICD"/>
    <property type="match status" value="1"/>
</dbReference>
<dbReference type="FunFam" id="1.25.40.10:FF:000188">
    <property type="entry name" value="adenosine monophosphate-protein transferase FICD"/>
    <property type="match status" value="1"/>
</dbReference>
<dbReference type="Gene3D" id="1.10.3290.10">
    <property type="entry name" value="Fido-like domain"/>
    <property type="match status" value="1"/>
</dbReference>
<dbReference type="Gene3D" id="1.25.40.10">
    <property type="entry name" value="Tetratricopeptide repeat domain"/>
    <property type="match status" value="1"/>
</dbReference>
<dbReference type="InterPro" id="IPR003812">
    <property type="entry name" value="Fido"/>
</dbReference>
<dbReference type="InterPro" id="IPR036597">
    <property type="entry name" value="Fido-like_dom_sf"/>
</dbReference>
<dbReference type="InterPro" id="IPR040198">
    <property type="entry name" value="Fido_containing"/>
</dbReference>
<dbReference type="InterPro" id="IPR011990">
    <property type="entry name" value="TPR-like_helical_dom_sf"/>
</dbReference>
<dbReference type="PANTHER" id="PTHR13504">
    <property type="entry name" value="FIDO DOMAIN-CONTAINING PROTEIN DDB_G0283145"/>
    <property type="match status" value="1"/>
</dbReference>
<dbReference type="PANTHER" id="PTHR13504:SF34">
    <property type="entry name" value="PROTEIN ADENYLYLTRANSFERASE FICD"/>
    <property type="match status" value="1"/>
</dbReference>
<dbReference type="Pfam" id="PF02661">
    <property type="entry name" value="Fic"/>
    <property type="match status" value="1"/>
</dbReference>
<dbReference type="SUPFAM" id="SSF140931">
    <property type="entry name" value="Fic-like"/>
    <property type="match status" value="1"/>
</dbReference>
<dbReference type="SUPFAM" id="SSF48452">
    <property type="entry name" value="TPR-like"/>
    <property type="match status" value="1"/>
</dbReference>
<dbReference type="PROSITE" id="PS51459">
    <property type="entry name" value="FIDO"/>
    <property type="match status" value="1"/>
</dbReference>
<dbReference type="PROSITE" id="PS50293">
    <property type="entry name" value="TPR_REGION"/>
    <property type="match status" value="1"/>
</dbReference>
<gene>
    <name evidence="8" type="primary">Ficd</name>
    <name evidence="8" type="synonym">D5Ertd40e</name>
</gene>
<feature type="chain" id="PRO_0000317302" description="Protein adenylyltransferase FICD">
    <location>
        <begin position="1"/>
        <end position="458"/>
    </location>
</feature>
<feature type="topological domain" description="Cytoplasmic" evidence="2">
    <location>
        <begin position="1"/>
        <end position="23"/>
    </location>
</feature>
<feature type="transmembrane region" description="Helical; Signal-anchor for type II membrane protein" evidence="3">
    <location>
        <begin position="24"/>
        <end position="44"/>
    </location>
</feature>
<feature type="topological domain" description="Lumenal" evidence="2">
    <location>
        <begin position="45"/>
        <end position="458"/>
    </location>
</feature>
<feature type="repeat" description="TPR 1">
    <location>
        <begin position="106"/>
        <end position="139"/>
    </location>
</feature>
<feature type="repeat" description="TPR 2">
    <location>
        <begin position="140"/>
        <end position="173"/>
    </location>
</feature>
<feature type="domain" description="Fido" evidence="4">
    <location>
        <begin position="285"/>
        <end position="420"/>
    </location>
</feature>
<feature type="short sequence motif" description="Inhibitory (S/T)XXXE(G/N) motif" evidence="2">
    <location>
        <begin position="230"/>
        <end position="235"/>
    </location>
</feature>
<feature type="active site" evidence="2">
    <location>
        <position position="363"/>
    </location>
</feature>
<feature type="binding site" evidence="2">
    <location>
        <position position="234"/>
    </location>
    <ligand>
        <name>ATP</name>
        <dbReference type="ChEBI" id="CHEBI:30616"/>
    </ligand>
</feature>
<feature type="binding site" evidence="2">
    <location>
        <begin position="316"/>
        <end position="319"/>
    </location>
    <ligand>
        <name>ATP</name>
        <dbReference type="ChEBI" id="CHEBI:30616"/>
    </ligand>
</feature>
<feature type="binding site" evidence="2">
    <location>
        <begin position="367"/>
        <end position="374"/>
    </location>
    <ligand>
        <name>ATP</name>
        <dbReference type="ChEBI" id="CHEBI:30616"/>
    </ligand>
</feature>
<feature type="binding site" evidence="2">
    <location>
        <begin position="399"/>
        <end position="400"/>
    </location>
    <ligand>
        <name>ATP</name>
        <dbReference type="ChEBI" id="CHEBI:30616"/>
    </ligand>
</feature>
<feature type="binding site" evidence="2">
    <location>
        <position position="407"/>
    </location>
    <ligand>
        <name>ATP</name>
        <dbReference type="ChEBI" id="CHEBI:30616"/>
    </ligand>
</feature>
<feature type="site" description="Important for autoinhibition of adenylyltransferase activity" evidence="2">
    <location>
        <position position="234"/>
    </location>
</feature>
<feature type="modified residue" description="O-AMP-threonine; by autocatalysis" evidence="2">
    <location>
        <position position="80"/>
    </location>
</feature>
<feature type="modified residue" description="O-AMP-threonine; by autocatalysis" evidence="2">
    <location>
        <position position="183"/>
    </location>
</feature>
<feature type="glycosylation site" description="N-linked (GlcNAc...) asparagine" evidence="3">
    <location>
        <position position="275"/>
    </location>
</feature>
<feature type="splice variant" id="VSP_030934" description="In isoform 2." evidence="5 6">
    <location>
        <begin position="1"/>
        <end position="115"/>
    </location>
</feature>
<feature type="sequence conflict" description="In Ref. 1; BAC31924." evidence="7" ref="1">
    <original>P</original>
    <variation>L</variation>
    <location>
        <position position="70"/>
    </location>
</feature>
<feature type="sequence conflict" description="In Ref. 2; AAI39822." evidence="7" ref="2">
    <original>G</original>
    <variation>R</variation>
    <location>
        <position position="283"/>
    </location>
</feature>
<evidence type="ECO:0000250" key="1">
    <source>
        <dbReference type="UniProtKB" id="A0A061I403"/>
    </source>
</evidence>
<evidence type="ECO:0000250" key="2">
    <source>
        <dbReference type="UniProtKB" id="Q9BVA6"/>
    </source>
</evidence>
<evidence type="ECO:0000255" key="3"/>
<evidence type="ECO:0000255" key="4">
    <source>
        <dbReference type="PROSITE-ProRule" id="PRU00791"/>
    </source>
</evidence>
<evidence type="ECO:0000303" key="5">
    <source>
    </source>
</evidence>
<evidence type="ECO:0000303" key="6">
    <source>
    </source>
</evidence>
<evidence type="ECO:0000305" key="7"/>
<evidence type="ECO:0000312" key="8">
    <source>
        <dbReference type="MGI" id="MGI:1098550"/>
    </source>
</evidence>
<reference key="1">
    <citation type="journal article" date="2005" name="Science">
        <title>The transcriptional landscape of the mammalian genome.</title>
        <authorList>
            <person name="Carninci P."/>
            <person name="Kasukawa T."/>
            <person name="Katayama S."/>
            <person name="Gough J."/>
            <person name="Frith M.C."/>
            <person name="Maeda N."/>
            <person name="Oyama R."/>
            <person name="Ravasi T."/>
            <person name="Lenhard B."/>
            <person name="Wells C."/>
            <person name="Kodzius R."/>
            <person name="Shimokawa K."/>
            <person name="Bajic V.B."/>
            <person name="Brenner S.E."/>
            <person name="Batalov S."/>
            <person name="Forrest A.R."/>
            <person name="Zavolan M."/>
            <person name="Davis M.J."/>
            <person name="Wilming L.G."/>
            <person name="Aidinis V."/>
            <person name="Allen J.E."/>
            <person name="Ambesi-Impiombato A."/>
            <person name="Apweiler R."/>
            <person name="Aturaliya R.N."/>
            <person name="Bailey T.L."/>
            <person name="Bansal M."/>
            <person name="Baxter L."/>
            <person name="Beisel K.W."/>
            <person name="Bersano T."/>
            <person name="Bono H."/>
            <person name="Chalk A.M."/>
            <person name="Chiu K.P."/>
            <person name="Choudhary V."/>
            <person name="Christoffels A."/>
            <person name="Clutterbuck D.R."/>
            <person name="Crowe M.L."/>
            <person name="Dalla E."/>
            <person name="Dalrymple B.P."/>
            <person name="de Bono B."/>
            <person name="Della Gatta G."/>
            <person name="di Bernardo D."/>
            <person name="Down T."/>
            <person name="Engstrom P."/>
            <person name="Fagiolini M."/>
            <person name="Faulkner G."/>
            <person name="Fletcher C.F."/>
            <person name="Fukushima T."/>
            <person name="Furuno M."/>
            <person name="Futaki S."/>
            <person name="Gariboldi M."/>
            <person name="Georgii-Hemming P."/>
            <person name="Gingeras T.R."/>
            <person name="Gojobori T."/>
            <person name="Green R.E."/>
            <person name="Gustincich S."/>
            <person name="Harbers M."/>
            <person name="Hayashi Y."/>
            <person name="Hensch T.K."/>
            <person name="Hirokawa N."/>
            <person name="Hill D."/>
            <person name="Huminiecki L."/>
            <person name="Iacono M."/>
            <person name="Ikeo K."/>
            <person name="Iwama A."/>
            <person name="Ishikawa T."/>
            <person name="Jakt M."/>
            <person name="Kanapin A."/>
            <person name="Katoh M."/>
            <person name="Kawasawa Y."/>
            <person name="Kelso J."/>
            <person name="Kitamura H."/>
            <person name="Kitano H."/>
            <person name="Kollias G."/>
            <person name="Krishnan S.P."/>
            <person name="Kruger A."/>
            <person name="Kummerfeld S.K."/>
            <person name="Kurochkin I.V."/>
            <person name="Lareau L.F."/>
            <person name="Lazarevic D."/>
            <person name="Lipovich L."/>
            <person name="Liu J."/>
            <person name="Liuni S."/>
            <person name="McWilliam S."/>
            <person name="Madan Babu M."/>
            <person name="Madera M."/>
            <person name="Marchionni L."/>
            <person name="Matsuda H."/>
            <person name="Matsuzawa S."/>
            <person name="Miki H."/>
            <person name="Mignone F."/>
            <person name="Miyake S."/>
            <person name="Morris K."/>
            <person name="Mottagui-Tabar S."/>
            <person name="Mulder N."/>
            <person name="Nakano N."/>
            <person name="Nakauchi H."/>
            <person name="Ng P."/>
            <person name="Nilsson R."/>
            <person name="Nishiguchi S."/>
            <person name="Nishikawa S."/>
            <person name="Nori F."/>
            <person name="Ohara O."/>
            <person name="Okazaki Y."/>
            <person name="Orlando V."/>
            <person name="Pang K.C."/>
            <person name="Pavan W.J."/>
            <person name="Pavesi G."/>
            <person name="Pesole G."/>
            <person name="Petrovsky N."/>
            <person name="Piazza S."/>
            <person name="Reed J."/>
            <person name="Reid J.F."/>
            <person name="Ring B.Z."/>
            <person name="Ringwald M."/>
            <person name="Rost B."/>
            <person name="Ruan Y."/>
            <person name="Salzberg S.L."/>
            <person name="Sandelin A."/>
            <person name="Schneider C."/>
            <person name="Schoenbach C."/>
            <person name="Sekiguchi K."/>
            <person name="Semple C.A."/>
            <person name="Seno S."/>
            <person name="Sessa L."/>
            <person name="Sheng Y."/>
            <person name="Shibata Y."/>
            <person name="Shimada H."/>
            <person name="Shimada K."/>
            <person name="Silva D."/>
            <person name="Sinclair B."/>
            <person name="Sperling S."/>
            <person name="Stupka E."/>
            <person name="Sugiura K."/>
            <person name="Sultana R."/>
            <person name="Takenaka Y."/>
            <person name="Taki K."/>
            <person name="Tammoja K."/>
            <person name="Tan S.L."/>
            <person name="Tang S."/>
            <person name="Taylor M.S."/>
            <person name="Tegner J."/>
            <person name="Teichmann S.A."/>
            <person name="Ueda H.R."/>
            <person name="van Nimwegen E."/>
            <person name="Verardo R."/>
            <person name="Wei C.L."/>
            <person name="Yagi K."/>
            <person name="Yamanishi H."/>
            <person name="Zabarovsky E."/>
            <person name="Zhu S."/>
            <person name="Zimmer A."/>
            <person name="Hide W."/>
            <person name="Bult C."/>
            <person name="Grimmond S.M."/>
            <person name="Teasdale R.D."/>
            <person name="Liu E.T."/>
            <person name="Brusic V."/>
            <person name="Quackenbush J."/>
            <person name="Wahlestedt C."/>
            <person name="Mattick J.S."/>
            <person name="Hume D.A."/>
            <person name="Kai C."/>
            <person name="Sasaki D."/>
            <person name="Tomaru Y."/>
            <person name="Fukuda S."/>
            <person name="Kanamori-Katayama M."/>
            <person name="Suzuki M."/>
            <person name="Aoki J."/>
            <person name="Arakawa T."/>
            <person name="Iida J."/>
            <person name="Imamura K."/>
            <person name="Itoh M."/>
            <person name="Kato T."/>
            <person name="Kawaji H."/>
            <person name="Kawagashira N."/>
            <person name="Kawashima T."/>
            <person name="Kojima M."/>
            <person name="Kondo S."/>
            <person name="Konno H."/>
            <person name="Nakano K."/>
            <person name="Ninomiya N."/>
            <person name="Nishio T."/>
            <person name="Okada M."/>
            <person name="Plessy C."/>
            <person name="Shibata K."/>
            <person name="Shiraki T."/>
            <person name="Suzuki S."/>
            <person name="Tagami M."/>
            <person name="Waki K."/>
            <person name="Watahiki A."/>
            <person name="Okamura-Oho Y."/>
            <person name="Suzuki H."/>
            <person name="Kawai J."/>
            <person name="Hayashizaki Y."/>
        </authorList>
    </citation>
    <scope>NUCLEOTIDE SEQUENCE [LARGE SCALE MRNA] (ISOFORMS 1 AND 2)</scope>
    <source>
        <strain>C57BL/6J</strain>
        <tissue>Ovary</tissue>
        <tissue>Retina</tissue>
    </source>
</reference>
<reference key="2">
    <citation type="journal article" date="2004" name="Genome Res.">
        <title>The status, quality, and expansion of the NIH full-length cDNA project: the Mammalian Gene Collection (MGC).</title>
        <authorList>
            <consortium name="The MGC Project Team"/>
        </authorList>
    </citation>
    <scope>NUCLEOTIDE SEQUENCE [LARGE SCALE MRNA] (ISOFORM 2)</scope>
</reference>
<protein>
    <recommendedName>
        <fullName evidence="7">Protein adenylyltransferase FICD</fullName>
        <ecNumber evidence="2">2.7.7.108</ecNumber>
    </recommendedName>
    <alternativeName>
        <fullName evidence="2">AMPylator FICD</fullName>
    </alternativeName>
    <alternativeName>
        <fullName evidence="1">De-AMPylase FICD</fullName>
        <ecNumber evidence="1">3.1.4.-</ecNumber>
    </alternativeName>
    <alternativeName>
        <fullName evidence="2">FIC domain-containing protein</fullName>
    </alternativeName>
</protein>
<keyword id="KW-0025">Alternative splicing</keyword>
<keyword id="KW-0067">ATP-binding</keyword>
<keyword id="KW-0256">Endoplasmic reticulum</keyword>
<keyword id="KW-0325">Glycoprotein</keyword>
<keyword id="KW-0378">Hydrolase</keyword>
<keyword id="KW-0460">Magnesium</keyword>
<keyword id="KW-0464">Manganese</keyword>
<keyword id="KW-0472">Membrane</keyword>
<keyword id="KW-0547">Nucleotide-binding</keyword>
<keyword id="KW-0548">Nucleotidyltransferase</keyword>
<keyword id="KW-0597">Phosphoprotein</keyword>
<keyword id="KW-1185">Reference proteome</keyword>
<keyword id="KW-0677">Repeat</keyword>
<keyword id="KW-0735">Signal-anchor</keyword>
<keyword id="KW-0802">TPR repeat</keyword>
<keyword id="KW-0808">Transferase</keyword>
<keyword id="KW-0812">Transmembrane</keyword>
<keyword id="KW-1133">Transmembrane helix</keyword>
<keyword id="KW-0834">Unfolded protein response</keyword>
<proteinExistence type="evidence at transcript level"/>
<organism>
    <name type="scientific">Mus musculus</name>
    <name type="common">Mouse</name>
    <dbReference type="NCBI Taxonomy" id="10090"/>
    <lineage>
        <taxon>Eukaryota</taxon>
        <taxon>Metazoa</taxon>
        <taxon>Chordata</taxon>
        <taxon>Craniata</taxon>
        <taxon>Vertebrata</taxon>
        <taxon>Euteleostomi</taxon>
        <taxon>Mammalia</taxon>
        <taxon>Eutheria</taxon>
        <taxon>Euarchontoglires</taxon>
        <taxon>Glires</taxon>
        <taxon>Rodentia</taxon>
        <taxon>Myomorpha</taxon>
        <taxon>Muroidea</taxon>
        <taxon>Muridae</taxon>
        <taxon>Murinae</taxon>
        <taxon>Mus</taxon>
        <taxon>Mus</taxon>
    </lineage>
</organism>
<accession>Q8BIX9</accession>
<accession>A4QPF9</accession>
<accession>Q8BIC9</accession>
<accession>Q8BJ12</accession>
<comment type="function">
    <text evidence="1 2">Protein that can both mediate the addition of adenosine 5'-monophosphate (AMP) to specific residues of target proteins (AMPylation), and the removal of the same modification from target proteins (de-AMPylation), depending on the context (By similarity). The side chain of Glu-231 determines which of the two opposing activities (AMPylase or de-AMPylase) will take place (By similarity). Acts as a key regulator of the ERN1/IRE1-mediated unfolded protein response (UPR) by mediating AMPylation or de-AMPylation of HSPA5/BiP (By similarity). In unstressed cells, acts as an adenylyltransferase by mediating AMPylation of HSPA5/BiP at 'Thr-518', thereby inactivating it (By similarity). In response to endoplasmic reticulum stress, acts as a phosphodiesterase by mediating removal of ATP (de-AMPylation) from HSPA5/BiP at 'Thr-518', leading to restore HSPA5/BiP activity (By similarity). Although it is able to AMPylate RhoA, Rac and Cdc42 Rho GTPases in vitro, Rho GTPases do not constitute physiological substrates (By similarity).</text>
</comment>
<comment type="catalytic activity">
    <reaction evidence="2">
        <text>L-tyrosyl-[protein] + ATP = O-(5'-adenylyl)-L-tyrosyl-[protein] + diphosphate</text>
        <dbReference type="Rhea" id="RHEA:54288"/>
        <dbReference type="Rhea" id="RHEA-COMP:10136"/>
        <dbReference type="Rhea" id="RHEA-COMP:13846"/>
        <dbReference type="ChEBI" id="CHEBI:30616"/>
        <dbReference type="ChEBI" id="CHEBI:33019"/>
        <dbReference type="ChEBI" id="CHEBI:46858"/>
        <dbReference type="ChEBI" id="CHEBI:83624"/>
        <dbReference type="EC" id="2.7.7.108"/>
    </reaction>
</comment>
<comment type="catalytic activity">
    <reaction evidence="1">
        <text>3-O-(5'-adenylyl)-L-threonyl-[protein] + H2O = L-threonyl-[protein] + AMP + H(+)</text>
        <dbReference type="Rhea" id="RHEA:55932"/>
        <dbReference type="Rhea" id="RHEA-COMP:11060"/>
        <dbReference type="Rhea" id="RHEA-COMP:13847"/>
        <dbReference type="ChEBI" id="CHEBI:15377"/>
        <dbReference type="ChEBI" id="CHEBI:15378"/>
        <dbReference type="ChEBI" id="CHEBI:30013"/>
        <dbReference type="ChEBI" id="CHEBI:138113"/>
        <dbReference type="ChEBI" id="CHEBI:456215"/>
    </reaction>
</comment>
<comment type="catalytic activity">
    <reaction evidence="2">
        <text>L-threonyl-[protein] + ATP = 3-O-(5'-adenylyl)-L-threonyl-[protein] + diphosphate</text>
        <dbReference type="Rhea" id="RHEA:54292"/>
        <dbReference type="Rhea" id="RHEA-COMP:11060"/>
        <dbReference type="Rhea" id="RHEA-COMP:13847"/>
        <dbReference type="ChEBI" id="CHEBI:30013"/>
        <dbReference type="ChEBI" id="CHEBI:30616"/>
        <dbReference type="ChEBI" id="CHEBI:33019"/>
        <dbReference type="ChEBI" id="CHEBI:138113"/>
        <dbReference type="EC" id="2.7.7.108"/>
    </reaction>
</comment>
<comment type="cofactor">
    <cofactor evidence="2">
        <name>Mg(2+)</name>
        <dbReference type="ChEBI" id="CHEBI:18420"/>
    </cofactor>
    <cofactor evidence="2">
        <name>Mn(2+)</name>
        <dbReference type="ChEBI" id="CHEBI:29035"/>
    </cofactor>
    <text evidence="2">Divalent metal cation. Prefers Mn(2+) over Mg(2+).</text>
</comment>
<comment type="activity regulation">
    <text evidence="1 2">The side chain of Glu-234 determines which of the two opposing activities (AMPylase or de-AMPylase) will take place. In response to endoplasmic reticulum stress, mediates de-AMPylase activity (By similarity). Adenylyltransferase activity is inhibited by the inhibitory helix present at the N-terminus: Glu-234 binds ATP and competes with ATP-binding at Arg-374, thereby preventing adenylyltransferase activity (By similarity). In unstressed cells, disengagement of Glu-234 promotes adenylyltransferase activity (By similarity). Activation dissociates ATP-binding from Glu-234, allowing ordered binding of the entire ATP moiety with the alpha-phosphate in an orientation that is productive for accepting an incoming target hydroxyl side chain (By similarity).</text>
</comment>
<comment type="subunit">
    <text evidence="2">Homodimer. Interacts with HD.</text>
</comment>
<comment type="subcellular location">
    <subcellularLocation>
        <location evidence="2">Endoplasmic reticulum membrane</location>
        <topology evidence="2">Single-pass type II membrane protein</topology>
    </subcellularLocation>
</comment>
<comment type="alternative products">
    <event type="alternative splicing"/>
    <isoform>
        <id>Q8BIX9-1</id>
        <name>1</name>
        <sequence type="displayed"/>
    </isoform>
    <isoform>
        <id>Q8BIX9-2</id>
        <name>2</name>
        <sequence type="described" ref="VSP_030934"/>
    </isoform>
</comment>
<comment type="domain">
    <text evidence="2">The fido domain mediates the adenylyltransferase activity.</text>
</comment>
<comment type="PTM">
    <text evidence="2">Auto-AMPylated in vitro.</text>
</comment>
<comment type="similarity">
    <text evidence="7">Belongs to the fic family.</text>
</comment>
<sequence>MILMPMASVVAVAEPKWVSVWGRFLWMALLSMALGSLLALLLPLGVVEEHCLAVLRGFHLLRSKLDRAQPVVPKCTSLCTELSVSSRDAGLLTVKTTASPAGKLEAKAALNQALEMKRQGKRGKAHKLFLHALKMDPGFVDALNEFGIFSEEDKDIIQADYLYTRALTISPFHEKALVNRDRTLPLVEEIDQRYFSVIDSKVKKVMSIPKGSSALRRVMEETYYHHIYHTVAIEGNTLTLSEIRHILETRYAVPGKSLEEQNEVIGMHAAMKYINTTLVSRIGSVTMDDMLEIHRRVLGYVDPVEAGRFRRTQVLVGHHIPPHPRDVEKQMQEFTQWLNSEDAMNLHPVEFAALAHYKLVYIHPFIDGNGRTSRLLMNLILMQAGYPPITIRKEQRSEYYHVLEVANEGDVRPFIRFIAKCTEVTLDTLLLATTEYSVALPEAQPNHSGFKETLPVRP</sequence>